<proteinExistence type="inferred from homology"/>
<gene>
    <name type="primary">embB</name>
</gene>
<organism>
    <name type="scientific">Mycolicibacterium smegmatis</name>
    <name type="common">Mycobacterium smegmatis</name>
    <dbReference type="NCBI Taxonomy" id="1772"/>
    <lineage>
        <taxon>Bacteria</taxon>
        <taxon>Bacillati</taxon>
        <taxon>Actinomycetota</taxon>
        <taxon>Actinomycetes</taxon>
        <taxon>Mycobacteriales</taxon>
        <taxon>Mycobacteriaceae</taxon>
        <taxon>Mycolicibacterium</taxon>
    </lineage>
</organism>
<feature type="chain" id="PRO_0000220568" description="Probable arabinosyltransferase B">
    <location>
        <begin position="1"/>
        <end position="1082"/>
    </location>
</feature>
<feature type="transmembrane region" description="Helical" evidence="1">
    <location>
        <begin position="28"/>
        <end position="50"/>
    </location>
</feature>
<feature type="transmembrane region" description="Helical" evidence="1">
    <location>
        <begin position="223"/>
        <end position="241"/>
    </location>
</feature>
<feature type="transmembrane region" description="Helical" evidence="1">
    <location>
        <begin position="262"/>
        <end position="281"/>
    </location>
</feature>
<feature type="transmembrane region" description="Helical" evidence="1">
    <location>
        <begin position="333"/>
        <end position="352"/>
    </location>
</feature>
<feature type="transmembrane region" description="Helical" evidence="1">
    <location>
        <begin position="359"/>
        <end position="381"/>
    </location>
</feature>
<feature type="transmembrane region" description="Helical" evidence="1">
    <location>
        <begin position="420"/>
        <end position="442"/>
    </location>
</feature>
<feature type="transmembrane region" description="Helical" evidence="1">
    <location>
        <begin position="462"/>
        <end position="481"/>
    </location>
</feature>
<feature type="transmembrane region" description="Helical" evidence="1">
    <location>
        <begin position="522"/>
        <end position="544"/>
    </location>
</feature>
<feature type="transmembrane region" description="Helical" evidence="1">
    <location>
        <begin position="557"/>
        <end position="574"/>
    </location>
</feature>
<feature type="transmembrane region" description="Helical" evidence="1">
    <location>
        <begin position="578"/>
        <end position="600"/>
    </location>
</feature>
<feature type="transmembrane region" description="Helical" evidence="1">
    <location>
        <begin position="613"/>
        <end position="635"/>
    </location>
</feature>
<feature type="transmembrane region" description="Helical" evidence="1">
    <location>
        <begin position="650"/>
        <end position="672"/>
    </location>
</feature>
<feature type="transmembrane region" description="Helical" evidence="1">
    <location>
        <begin position="689"/>
        <end position="711"/>
    </location>
</feature>
<feature type="sequence variant" description="Resistance to EMB." evidence="2">
    <original>I</original>
    <variation>F</variation>
    <location>
        <position position="289"/>
    </location>
</feature>
<feature type="sequence variant" description="Resistance to EMB." evidence="2">
    <original>I</original>
    <variation>M</variation>
    <location>
        <position position="289"/>
    </location>
</feature>
<feature type="sequence variant" description="Resistance to EMB." evidence="2">
    <original>M</original>
    <variation>T</variation>
    <location>
        <position position="292"/>
    </location>
</feature>
<feature type="sequence conflict" description="In Ref. 2; AAB69157." evidence="3" ref="2">
    <original>I</original>
    <variation>M</variation>
    <location>
        <position position="453"/>
    </location>
</feature>
<feature type="sequence conflict" description="In Ref. 2; AAB69157." evidence="3" ref="2">
    <original>D</original>
    <variation>V</variation>
    <location>
        <position position="459"/>
    </location>
</feature>
<feature type="sequence conflict" description="In Ref. 2; AAB69157." evidence="3" ref="2">
    <original>K</original>
    <variation>N</variation>
    <location>
        <position position="508"/>
    </location>
</feature>
<feature type="sequence conflict" description="In Ref. 2; AAB69157." evidence="3" ref="2">
    <original>T</original>
    <variation>I</variation>
    <location>
        <position position="579"/>
    </location>
</feature>
<keyword id="KW-0046">Antibiotic resistance</keyword>
<keyword id="KW-1003">Cell membrane</keyword>
<keyword id="KW-0961">Cell wall biogenesis/degradation</keyword>
<keyword id="KW-0328">Glycosyltransferase</keyword>
<keyword id="KW-0472">Membrane</keyword>
<keyword id="KW-0808">Transferase</keyword>
<keyword id="KW-0812">Transmembrane</keyword>
<keyword id="KW-1133">Transmembrane helix</keyword>
<accession>Q50395</accession>
<accession>O30406</accession>
<comment type="function">
    <text>Arabinosyl transferase responsible for the polymerization of arabinose into the arabinan of arabinogalactan.</text>
</comment>
<comment type="subcellular location">
    <subcellularLocation>
        <location evidence="3">Cell membrane</location>
        <topology evidence="3">Multi-pass membrane protein</topology>
    </subcellularLocation>
</comment>
<comment type="miscellaneous">
    <text>This is one of the targets of the anti-tuberculosis drug ethambutol [(S,S')-2,2'-(ethylenediimino)di-1-butanol; EMB]. EMB is a first-line drug used to treat tuberculosis. EMB inhibits the transfer of arabinogalactan into the cell wall.</text>
</comment>
<comment type="similarity">
    <text evidence="3">Belongs to the emb family.</text>
</comment>
<sequence length="1082" mass="116777">MSGNMDEAVSGNMDEAVSAGKDVRIARWVATIAGLLGFVLSVSIPLLPVTQTTATLNWPQQGRLDNVTAPLISQAPLELTATVPCSVVRDLPPEGGLVFGTAPAEGRDAALNAMLVNVTETRVDVIVRNVVVASVNRDRVAGPDCQRIEITSNLDGTYADFVGLTQISGEDAGKLQRTGYPDPNLRPAIVGVFTDLTGPAPQGLSVSAEIDTRFTTHPTALKLAAMLLAIVSTVIALLALWRLDRLDGRRMHRLIPTRWRTVTAVDGVVVGGMAIWYVIGANSSDDGYILQMARTAEHAGYMANYFRWFGSPEDPFGWYYNVLALMTKVSDASIWIRLPDLICALICWLLLSREVLPRLGPAVAGSRAAMWAAGLVLLGAWMPFNNGLRPEGQIATGALITYVLIERAVTSGRLTPAALAITTAAFTLGIQPTGLIAVAALLAGGRPILRIVIRRRRLDGTWPLIAPLLAAGTVILAVVFADQTIATVLEATRIRTAIGPSQEWWTEKLRYYYLILPTTDGAISRRVAFVFTAMCLFPSLFMMLRRKHIAGVARGPAWRLMGIIFATMFFLMFTPTKWTHHFGLFAAVGGAMAALATVLVSPTVLRSARNRMAFLSLVLFVLAFCFASTNGWWYVSNFGAPFNNSVPKVGGVQISAIFFALSAIAALWAFWLHLTRRTESRVVDRLTAAPIPVAAGFMVVVMMASMAIGVVRQYPTYSNGWANIRAFAGGCGLADDVLVEPDSNAGFLTPLPGAYGPLGPLGGEDPQGFSPDGVPDRIIAEAIRLNNPQPGTDYDWNRPIKLDEPGINGSTVPLPYGLDPKRVPVAGTYSTEAQQESRLSSAWYELPARDETERAAHPLVVITAAGTITGESVANGLTTGQTVDLEYATRGPDGTLVPAGRVTPYDVGPTPSWRNLRYPRSEIPDDAVAVRVVAEDLSLSQGDWIAVTPPRVPELQSVQEYVGSDQPVLMDWAVGLAFPCQQPMLHANGVTEVPKFRISPDYYAKLQSTDTWQDGINGGLLGITDLLLRASVMSTYLSQDWGQDWGSLRKFDTVVEATPAELDFGSQTHSGLYSPGPLRIRP</sequence>
<reference key="1">
    <citation type="journal article" date="1997" name="Nat. Med.">
        <title>The emb operon, a gene cluster of Mycobacterium tuberculosis involved in resistance to ethambutol.</title>
        <authorList>
            <person name="Telenti A."/>
            <person name="Philipp W.J."/>
            <person name="Sreevatsan S."/>
            <person name="Bernasconi C."/>
            <person name="Stockbauer K.E."/>
            <person name="Wieles B."/>
            <person name="Musser J.M."/>
            <person name="Jacobs W.R. Jr."/>
        </authorList>
    </citation>
    <scope>NUCLEOTIDE SEQUENCE [GENOMIC DNA]</scope>
    <source>
        <strain>imm30</strain>
    </source>
</reference>
<reference key="2">
    <citation type="journal article" date="1997" name="Antimicrob. Agents Chemother.">
        <title>A single point mutation in the embB gene is responsible for resistance to ethambutol in Mycobacterium smegmatis.</title>
        <authorList>
            <person name="Lety M.A."/>
            <person name="Nair S."/>
            <person name="Berche P."/>
            <person name="Escuyer V."/>
        </authorList>
    </citation>
    <scope>NUCLEOTIDE SEQUENCE [GENOMIC DNA]</scope>
    <scope>VARIANTS EMB RESISTANT PHE-289; MET-289 AND THR-292</scope>
    <source>
        <strain>em30</strain>
    </source>
</reference>
<dbReference type="EC" id="2.4.2.-"/>
<dbReference type="EMBL" id="U46844">
    <property type="protein sequence ID" value="AAC45273.1"/>
    <property type="molecule type" value="Genomic_DNA"/>
</dbReference>
<dbReference type="EMBL" id="AF004289">
    <property type="protein sequence ID" value="AAB69157.1"/>
    <property type="molecule type" value="Genomic_DNA"/>
</dbReference>
<dbReference type="PIR" id="T45096">
    <property type="entry name" value="T45096"/>
</dbReference>
<dbReference type="SMR" id="Q50395"/>
<dbReference type="CAZy" id="GT53">
    <property type="family name" value="Glycosyltransferase Family 53"/>
</dbReference>
<dbReference type="GO" id="GO:0005886">
    <property type="term" value="C:plasma membrane"/>
    <property type="evidence" value="ECO:0007669"/>
    <property type="project" value="UniProtKB-SubCell"/>
</dbReference>
<dbReference type="GO" id="GO:0052636">
    <property type="term" value="F:arabinosyltransferase activity"/>
    <property type="evidence" value="ECO:0007669"/>
    <property type="project" value="InterPro"/>
</dbReference>
<dbReference type="GO" id="GO:0071766">
    <property type="term" value="P:Actinobacterium-type cell wall biogenesis"/>
    <property type="evidence" value="ECO:0007669"/>
    <property type="project" value="InterPro"/>
</dbReference>
<dbReference type="GO" id="GO:0071555">
    <property type="term" value="P:cell wall organization"/>
    <property type="evidence" value="ECO:0007669"/>
    <property type="project" value="UniProtKB-KW"/>
</dbReference>
<dbReference type="GO" id="GO:0046677">
    <property type="term" value="P:response to antibiotic"/>
    <property type="evidence" value="ECO:0007669"/>
    <property type="project" value="UniProtKB-KW"/>
</dbReference>
<dbReference type="Gene3D" id="3.40.190.160">
    <property type="match status" value="1"/>
</dbReference>
<dbReference type="Gene3D" id="2.60.120.610">
    <property type="entry name" value="arabinofuranosyltransferase like domain"/>
    <property type="match status" value="1"/>
</dbReference>
<dbReference type="Gene3D" id="2.60.120.940">
    <property type="entry name" value="EmbC, C-terminal domain, subdomain 2"/>
    <property type="match status" value="1"/>
</dbReference>
<dbReference type="InterPro" id="IPR032731">
    <property type="entry name" value="Arabino_trans_C"/>
</dbReference>
<dbReference type="InterPro" id="IPR042486">
    <property type="entry name" value="Arabino_trans_C_2"/>
</dbReference>
<dbReference type="InterPro" id="IPR007680">
    <property type="entry name" value="Arabino_trans_central"/>
</dbReference>
<dbReference type="InterPro" id="IPR040920">
    <property type="entry name" value="Arabino_trans_N"/>
</dbReference>
<dbReference type="InterPro" id="IPR027451">
    <property type="entry name" value="EmbABC_dom1"/>
</dbReference>
<dbReference type="Pfam" id="PF14896">
    <property type="entry name" value="Arabino_trans_C"/>
    <property type="match status" value="1"/>
</dbReference>
<dbReference type="Pfam" id="PF17689">
    <property type="entry name" value="Arabino_trans_N"/>
    <property type="match status" value="1"/>
</dbReference>
<dbReference type="Pfam" id="PF04602">
    <property type="entry name" value="Arabinose_trans"/>
    <property type="match status" value="1"/>
</dbReference>
<name>EMBB_MYCSM</name>
<protein>
    <recommendedName>
        <fullName>Probable arabinosyltransferase B</fullName>
        <ecNumber>2.4.2.-</ecNumber>
    </recommendedName>
</protein>
<evidence type="ECO:0000255" key="1"/>
<evidence type="ECO:0000269" key="2">
    <source>
    </source>
</evidence>
<evidence type="ECO:0000305" key="3"/>